<reference key="1">
    <citation type="journal article" date="2005" name="Nature">
        <title>Genomic sequence of the pathogenic and allergenic filamentous fungus Aspergillus fumigatus.</title>
        <authorList>
            <person name="Nierman W.C."/>
            <person name="Pain A."/>
            <person name="Anderson M.J."/>
            <person name="Wortman J.R."/>
            <person name="Kim H.S."/>
            <person name="Arroyo J."/>
            <person name="Berriman M."/>
            <person name="Abe K."/>
            <person name="Archer D.B."/>
            <person name="Bermejo C."/>
            <person name="Bennett J.W."/>
            <person name="Bowyer P."/>
            <person name="Chen D."/>
            <person name="Collins M."/>
            <person name="Coulsen R."/>
            <person name="Davies R."/>
            <person name="Dyer P.S."/>
            <person name="Farman M.L."/>
            <person name="Fedorova N."/>
            <person name="Fedorova N.D."/>
            <person name="Feldblyum T.V."/>
            <person name="Fischer R."/>
            <person name="Fosker N."/>
            <person name="Fraser A."/>
            <person name="Garcia J.L."/>
            <person name="Garcia M.J."/>
            <person name="Goble A."/>
            <person name="Goldman G.H."/>
            <person name="Gomi K."/>
            <person name="Griffith-Jones S."/>
            <person name="Gwilliam R."/>
            <person name="Haas B.J."/>
            <person name="Haas H."/>
            <person name="Harris D.E."/>
            <person name="Horiuchi H."/>
            <person name="Huang J."/>
            <person name="Humphray S."/>
            <person name="Jimenez J."/>
            <person name="Keller N."/>
            <person name="Khouri H."/>
            <person name="Kitamoto K."/>
            <person name="Kobayashi T."/>
            <person name="Konzack S."/>
            <person name="Kulkarni R."/>
            <person name="Kumagai T."/>
            <person name="Lafton A."/>
            <person name="Latge J.-P."/>
            <person name="Li W."/>
            <person name="Lord A."/>
            <person name="Lu C."/>
            <person name="Majoros W.H."/>
            <person name="May G.S."/>
            <person name="Miller B.L."/>
            <person name="Mohamoud Y."/>
            <person name="Molina M."/>
            <person name="Monod M."/>
            <person name="Mouyna I."/>
            <person name="Mulligan S."/>
            <person name="Murphy L.D."/>
            <person name="O'Neil S."/>
            <person name="Paulsen I."/>
            <person name="Penalva M.A."/>
            <person name="Pertea M."/>
            <person name="Price C."/>
            <person name="Pritchard B.L."/>
            <person name="Quail M.A."/>
            <person name="Rabbinowitsch E."/>
            <person name="Rawlins N."/>
            <person name="Rajandream M.A."/>
            <person name="Reichard U."/>
            <person name="Renauld H."/>
            <person name="Robson G.D."/>
            <person name="Rodriguez de Cordoba S."/>
            <person name="Rodriguez-Pena J.M."/>
            <person name="Ronning C.M."/>
            <person name="Rutter S."/>
            <person name="Salzberg S.L."/>
            <person name="Sanchez M."/>
            <person name="Sanchez-Ferrero J.C."/>
            <person name="Saunders D."/>
            <person name="Seeger K."/>
            <person name="Squares R."/>
            <person name="Squares S."/>
            <person name="Takeuchi M."/>
            <person name="Tekaia F."/>
            <person name="Turner G."/>
            <person name="Vazquez de Aldana C.R."/>
            <person name="Weidman J."/>
            <person name="White O."/>
            <person name="Woodward J.R."/>
            <person name="Yu J.-H."/>
            <person name="Fraser C.M."/>
            <person name="Galagan J.E."/>
            <person name="Asai K."/>
            <person name="Machida M."/>
            <person name="Hall N."/>
            <person name="Barrell B.G."/>
            <person name="Denning D.W."/>
        </authorList>
    </citation>
    <scope>NUCLEOTIDE SEQUENCE [LARGE SCALE GENOMIC DNA]</scope>
    <source>
        <strain>ATCC MYA-4609 / CBS 101355 / FGSC A1100 / Af293</strain>
    </source>
</reference>
<reference key="2">
    <citation type="journal article" date="2019" name="Sci. Rep.">
        <title>Characterisation of novel-cell-wall LysM-domain proteins LdpA and LdpB from the human pathogenic fungus Aspergillus fumigatus.</title>
        <authorList>
            <person name="Muraosa Y."/>
            <person name="Toyotome T."/>
            <person name="Yahiro M."/>
            <person name="Kamei K."/>
        </authorList>
    </citation>
    <scope>FUNCTION</scope>
    <scope>SUBCELLULAR LOCATION</scope>
    <scope>DISRUPTION PHENOTYPE</scope>
    <scope>DOMAIN</scope>
</reference>
<comment type="function">
    <text evidence="7">Cell wall chitin of A.fumigatus recruits lung eosinophils during infection and ldpA might have a role in sequestration of chitin and act as triggers of host immunity to dampen host defense.</text>
</comment>
<comment type="subcellular location">
    <subcellularLocation>
        <location evidence="4">Secreted</location>
    </subcellularLocation>
    <subcellularLocation>
        <location evidence="4">Secreted</location>
        <location evidence="4">Cell wall</location>
    </subcellularLocation>
    <subcellularLocation>
        <location evidence="4">Secreted</location>
        <location evidence="4">Extracellular space</location>
        <location evidence="4">Extracellular matrix</location>
    </subcellularLocation>
</comment>
<comment type="domain">
    <text evidence="7">The LysM (lysin motif) domains are small globular domains involved in binding chitin in eukaryotes. LcpA contains 3 LysM domains.</text>
</comment>
<comment type="disruption phenotype">
    <text evidence="4">Has no significant effects on cell wall chitin content, cell wall integrity, fungal morphology and fungal growth (PubMed:30833675). Does not affect survival in a mouse model of invasive pulmonary aspergillosis (PubMed:30833675).</text>
</comment>
<comment type="similarity">
    <text evidence="6">Belongs to the secreted LysM effector family.</text>
</comment>
<dbReference type="EMBL" id="AAHF01000011">
    <property type="protein sequence ID" value="EAL85908.1"/>
    <property type="molecule type" value="Genomic_DNA"/>
</dbReference>
<dbReference type="RefSeq" id="XP_747946.1">
    <property type="nucleotide sequence ID" value="XM_742853.1"/>
</dbReference>
<dbReference type="STRING" id="330879.Q4WER9"/>
<dbReference type="EnsemblFungi" id="EAL85908">
    <property type="protein sequence ID" value="EAL85908"/>
    <property type="gene ID" value="AFUA_5G03980"/>
</dbReference>
<dbReference type="GeneID" id="3505617"/>
<dbReference type="KEGG" id="afm:AFUA_5G03980"/>
<dbReference type="eggNOG" id="KOG2806">
    <property type="taxonomic scope" value="Eukaryota"/>
</dbReference>
<dbReference type="HOGENOM" id="CLU_010591_8_0_1"/>
<dbReference type="InParanoid" id="Q4WER9"/>
<dbReference type="OMA" id="AGLWPNY"/>
<dbReference type="OrthoDB" id="5985073at2759"/>
<dbReference type="PHI-base" id="PHI:8934"/>
<dbReference type="Proteomes" id="UP000002530">
    <property type="component" value="Chromosome 5"/>
</dbReference>
<dbReference type="GO" id="GO:0005576">
    <property type="term" value="C:extracellular region"/>
    <property type="evidence" value="ECO:0007669"/>
    <property type="project" value="UniProtKB-SubCell"/>
</dbReference>
<dbReference type="GO" id="GO:0008061">
    <property type="term" value="F:chitin binding"/>
    <property type="evidence" value="ECO:0007669"/>
    <property type="project" value="UniProtKB-KW"/>
</dbReference>
<dbReference type="CDD" id="cd00118">
    <property type="entry name" value="LysM"/>
    <property type="match status" value="3"/>
</dbReference>
<dbReference type="Gene3D" id="3.10.350.10">
    <property type="entry name" value="LysM domain"/>
    <property type="match status" value="3"/>
</dbReference>
<dbReference type="InterPro" id="IPR052210">
    <property type="entry name" value="LysM1-like"/>
</dbReference>
<dbReference type="InterPro" id="IPR018392">
    <property type="entry name" value="LysM_dom"/>
</dbReference>
<dbReference type="InterPro" id="IPR036779">
    <property type="entry name" value="LysM_dom_sf"/>
</dbReference>
<dbReference type="PANTHER" id="PTHR34997">
    <property type="entry name" value="AM15"/>
    <property type="match status" value="1"/>
</dbReference>
<dbReference type="PANTHER" id="PTHR34997:SF2">
    <property type="entry name" value="LYSM DOMAIN-CONTAINING PROTEIN-RELATED"/>
    <property type="match status" value="1"/>
</dbReference>
<dbReference type="Pfam" id="PF01476">
    <property type="entry name" value="LysM"/>
    <property type="match status" value="3"/>
</dbReference>
<dbReference type="SMART" id="SM00257">
    <property type="entry name" value="LysM"/>
    <property type="match status" value="3"/>
</dbReference>
<dbReference type="SUPFAM" id="SSF54106">
    <property type="entry name" value="LysM domain"/>
    <property type="match status" value="3"/>
</dbReference>
<dbReference type="PROSITE" id="PS51782">
    <property type="entry name" value="LYSM"/>
    <property type="match status" value="3"/>
</dbReference>
<organism>
    <name type="scientific">Aspergillus fumigatus (strain ATCC MYA-4609 / CBS 101355 / FGSC A1100 / Af293)</name>
    <name type="common">Neosartorya fumigata</name>
    <dbReference type="NCBI Taxonomy" id="330879"/>
    <lineage>
        <taxon>Eukaryota</taxon>
        <taxon>Fungi</taxon>
        <taxon>Dikarya</taxon>
        <taxon>Ascomycota</taxon>
        <taxon>Pezizomycotina</taxon>
        <taxon>Eurotiomycetes</taxon>
        <taxon>Eurotiomycetidae</taxon>
        <taxon>Eurotiales</taxon>
        <taxon>Aspergillaceae</taxon>
        <taxon>Aspergillus</taxon>
        <taxon>Aspergillus subgen. Fumigati</taxon>
    </lineage>
</organism>
<keyword id="KW-0134">Cell wall</keyword>
<keyword id="KW-0147">Chitin-binding</keyword>
<keyword id="KW-0272">Extracellular matrix</keyword>
<keyword id="KW-1185">Reference proteome</keyword>
<keyword id="KW-0964">Secreted</keyword>
<keyword id="KW-0732">Signal</keyword>
<keyword id="KW-0843">Virulence</keyword>
<protein>
    <recommendedName>
        <fullName evidence="5">Secreted LysM effector ldpA</fullName>
    </recommendedName>
    <alternativeName>
        <fullName evidence="5">LysM domain protein A</fullName>
    </alternativeName>
</protein>
<feature type="signal peptide" evidence="1">
    <location>
        <begin position="1"/>
        <end position="19"/>
    </location>
</feature>
<feature type="chain" id="PRO_5004246385" description="Secreted LysM effector ldpA">
    <location>
        <begin position="20"/>
        <end position="378"/>
    </location>
</feature>
<feature type="domain" description="LysM 1" evidence="2">
    <location>
        <begin position="152"/>
        <end position="198"/>
    </location>
</feature>
<feature type="domain" description="LysM 2" evidence="2">
    <location>
        <begin position="245"/>
        <end position="291"/>
    </location>
</feature>
<feature type="domain" description="LysM 3" evidence="2">
    <location>
        <begin position="330"/>
        <end position="376"/>
    </location>
</feature>
<feature type="region of interest" description="Disordered" evidence="3">
    <location>
        <begin position="118"/>
        <end position="139"/>
    </location>
</feature>
<feature type="region of interest" description="Disordered" evidence="3">
    <location>
        <begin position="208"/>
        <end position="230"/>
    </location>
</feature>
<feature type="compositionally biased region" description="Low complexity" evidence="3">
    <location>
        <begin position="118"/>
        <end position="131"/>
    </location>
</feature>
<name>LYSMA_ASPFU</name>
<accession>Q4WER9</accession>
<gene>
    <name evidence="5" type="primary">ldpA</name>
    <name type="ORF">AFUA_5G03980</name>
</gene>
<sequence>MMKSIRFLASALALCLVDAYLVTPPGTPAPGAASACSAWVQASYGLTCDIIHRFYGMTAAEFEEWVSKCPAAQLYPLNYICTDSAKNPSVSQLGDGCTLISGLYYCVQVNYITQSPTWTPPTTTTRSTSSSAGNGVTTPTPTQTGMVSSCNRFYLVVSGDSCYDIAAAQGISLDNFYTWNPAVGSSCGGLWPDYYVCVGVISDGTTTTTTTTTTPTTTSTTTTTAGNGVTTPTPIQTGMVTNCNKFYQVVSGDGCYDIAAAAGIALNDFYTWNPAVGNTCAGLWPDYYVCVGIIGSSGTTTTKTTTTTTSGNGVATPTPTQSGMVSNCKKFYLVVSGDGCYDIAAAAGIALSDFYAWNPAVGDTCAGLWPNYYVCVGI</sequence>
<proteinExistence type="inferred from homology"/>
<evidence type="ECO:0000255" key="1"/>
<evidence type="ECO:0000255" key="2">
    <source>
        <dbReference type="PROSITE-ProRule" id="PRU01118"/>
    </source>
</evidence>
<evidence type="ECO:0000256" key="3">
    <source>
        <dbReference type="SAM" id="MobiDB-lite"/>
    </source>
</evidence>
<evidence type="ECO:0000269" key="4">
    <source>
    </source>
</evidence>
<evidence type="ECO:0000303" key="5">
    <source>
    </source>
</evidence>
<evidence type="ECO:0000305" key="6"/>
<evidence type="ECO:0000305" key="7">
    <source>
    </source>
</evidence>